<gene>
    <name type="primary">fusB</name>
    <name type="ordered locus">SCO6589</name>
    <name type="ORF">SC8A6.10</name>
</gene>
<name>EFG2_STRCO</name>
<comment type="function">
    <text evidence="1">Catalyzes the GTP-dependent ribosomal translocation step during translation elongation. During this step, the ribosome changes from the pre-translocational (PRE) to the post-translocational (POST) state as the newly formed A-site-bound peptidyl-tRNA and P-site-bound deacylated tRNA move to the P and E sites, respectively. Catalyzes the coordinated movement of the two tRNA molecules, the mRNA and conformational changes in the ribosome (By similarity).</text>
</comment>
<comment type="subcellular location">
    <subcellularLocation>
        <location evidence="1">Cytoplasm</location>
    </subcellularLocation>
</comment>
<comment type="similarity">
    <text evidence="2">Belongs to the TRAFAC class translation factor GTPase superfamily. Classic translation factor GTPase family. EF-G/EF-2 subfamily.</text>
</comment>
<protein>
    <recommendedName>
        <fullName>Elongation factor G 2</fullName>
        <shortName>EF-G 2</shortName>
    </recommendedName>
</protein>
<keyword id="KW-0963">Cytoplasm</keyword>
<keyword id="KW-0251">Elongation factor</keyword>
<keyword id="KW-0342">GTP-binding</keyword>
<keyword id="KW-0547">Nucleotide-binding</keyword>
<keyword id="KW-0648">Protein biosynthesis</keyword>
<keyword id="KW-1185">Reference proteome</keyword>
<evidence type="ECO:0000250" key="1"/>
<evidence type="ECO:0000305" key="2"/>
<accession>O87844</accession>
<reference key="1">
    <citation type="journal article" date="2002" name="Nature">
        <title>Complete genome sequence of the model actinomycete Streptomyces coelicolor A3(2).</title>
        <authorList>
            <person name="Bentley S.D."/>
            <person name="Chater K.F."/>
            <person name="Cerdeno-Tarraga A.-M."/>
            <person name="Challis G.L."/>
            <person name="Thomson N.R."/>
            <person name="James K.D."/>
            <person name="Harris D.E."/>
            <person name="Quail M.A."/>
            <person name="Kieser H."/>
            <person name="Harper D."/>
            <person name="Bateman A."/>
            <person name="Brown S."/>
            <person name="Chandra G."/>
            <person name="Chen C.W."/>
            <person name="Collins M."/>
            <person name="Cronin A."/>
            <person name="Fraser A."/>
            <person name="Goble A."/>
            <person name="Hidalgo J."/>
            <person name="Hornsby T."/>
            <person name="Howarth S."/>
            <person name="Huang C.-H."/>
            <person name="Kieser T."/>
            <person name="Larke L."/>
            <person name="Murphy L.D."/>
            <person name="Oliver K."/>
            <person name="O'Neil S."/>
            <person name="Rabbinowitsch E."/>
            <person name="Rajandream M.A."/>
            <person name="Rutherford K.M."/>
            <person name="Rutter S."/>
            <person name="Seeger K."/>
            <person name="Saunders D."/>
            <person name="Sharp S."/>
            <person name="Squares R."/>
            <person name="Squares S."/>
            <person name="Taylor K."/>
            <person name="Warren T."/>
            <person name="Wietzorrek A."/>
            <person name="Woodward J.R."/>
            <person name="Barrell B.G."/>
            <person name="Parkhill J."/>
            <person name="Hopwood D.A."/>
        </authorList>
    </citation>
    <scope>NUCLEOTIDE SEQUENCE [LARGE SCALE GENOMIC DNA]</scope>
    <source>
        <strain>ATCC BAA-471 / A3(2) / M145</strain>
    </source>
</reference>
<sequence length="686" mass="72921">MRTNPLTTVRNLGILAHVDAGKTTVTERILYLTGTTHKRGEVHDGTTVTDFDPQERDRGITIFAAAVSCAWAGHRINLIDTPGHVDFADEVERSLRVLDGAVAVFDAVAGVEPQSESVWRQADRHGVPRIAFVNKMDRAGADLDAAVASIRERLHPVPLVVQLPIGTEDGFTGVVDLPRMRALVWADGADAAEEGPVPGTLREEAARRRRVLEEAVAERHPGALEEFCDRETLTAATLTGALRDLTRTGDGVVVLCGSAYRNRGVEPLLDAVVAYLPSPLDVPPVRGTHDGAERERPADPAAPMAALAFKVNATPTGRLTYLRVYSGTIGKGDTVWDAGTRRTERIGRILRVRADRHDPLERAVAGDIVAVVGLKTARAGSTLCAPGAPLLLEPPGVAEPVVHVAVEARRSTETDRLAAALARLTEEDPSLALRTDPETAQTVLSGMGELHLEVAVERVRREYGLEVTVGRPGVAYRETVGEGVTGFVHRHVKQDGGAGQFAHIVLDVEPWEQDADGDGAGGGFVFRSTVVGGRVPQEYVRAVEAGCRDALAEGPLGGHPVTGLRVTLTDGRTHVKDSSDTAFRTAGRFGLRDALRASGMILLEPVVEVTVTVPEDGVGGVLGDLAARRGRVTGSDPRGGAVVVTATVPLAELFGYATRLRSRTQGRGTFTARPTGYAQAPAAVVR</sequence>
<dbReference type="EMBL" id="AL939128">
    <property type="protein sequence ID" value="CAA19782.1"/>
    <property type="molecule type" value="Genomic_DNA"/>
</dbReference>
<dbReference type="PIR" id="T35777">
    <property type="entry name" value="T35777"/>
</dbReference>
<dbReference type="RefSeq" id="NP_630668.1">
    <property type="nucleotide sequence ID" value="NC_003888.3"/>
</dbReference>
<dbReference type="SMR" id="O87844"/>
<dbReference type="STRING" id="100226.gene:17764247"/>
<dbReference type="PaxDb" id="100226-SCO6589"/>
<dbReference type="KEGG" id="sco:SCO6589"/>
<dbReference type="PATRIC" id="fig|100226.15.peg.6696"/>
<dbReference type="eggNOG" id="COG0480">
    <property type="taxonomic scope" value="Bacteria"/>
</dbReference>
<dbReference type="HOGENOM" id="CLU_002794_4_1_11"/>
<dbReference type="InParanoid" id="O87844"/>
<dbReference type="OrthoDB" id="9801472at2"/>
<dbReference type="PhylomeDB" id="O87844"/>
<dbReference type="Proteomes" id="UP000001973">
    <property type="component" value="Chromosome"/>
</dbReference>
<dbReference type="GO" id="GO:0005737">
    <property type="term" value="C:cytoplasm"/>
    <property type="evidence" value="ECO:0007669"/>
    <property type="project" value="UniProtKB-SubCell"/>
</dbReference>
<dbReference type="GO" id="GO:0005525">
    <property type="term" value="F:GTP binding"/>
    <property type="evidence" value="ECO:0007669"/>
    <property type="project" value="UniProtKB-UniRule"/>
</dbReference>
<dbReference type="GO" id="GO:0003924">
    <property type="term" value="F:GTPase activity"/>
    <property type="evidence" value="ECO:0007669"/>
    <property type="project" value="InterPro"/>
</dbReference>
<dbReference type="GO" id="GO:0003746">
    <property type="term" value="F:translation elongation factor activity"/>
    <property type="evidence" value="ECO:0007669"/>
    <property type="project" value="UniProtKB-UniRule"/>
</dbReference>
<dbReference type="GO" id="GO:0032790">
    <property type="term" value="P:ribosome disassembly"/>
    <property type="evidence" value="ECO:0000318"/>
    <property type="project" value="GO_Central"/>
</dbReference>
<dbReference type="CDD" id="cd01886">
    <property type="entry name" value="EF-G"/>
    <property type="match status" value="1"/>
</dbReference>
<dbReference type="CDD" id="cd16262">
    <property type="entry name" value="EFG_III"/>
    <property type="match status" value="1"/>
</dbReference>
<dbReference type="CDD" id="cd03713">
    <property type="entry name" value="EFG_mtEFG_C"/>
    <property type="match status" value="1"/>
</dbReference>
<dbReference type="CDD" id="cd04088">
    <property type="entry name" value="EFG_mtEFG_II"/>
    <property type="match status" value="1"/>
</dbReference>
<dbReference type="FunFam" id="3.30.70.240:FF:000019">
    <property type="entry name" value="Elongation factor G"/>
    <property type="match status" value="1"/>
</dbReference>
<dbReference type="FunFam" id="3.30.70.870:FF:000001">
    <property type="entry name" value="Elongation factor G"/>
    <property type="match status" value="1"/>
</dbReference>
<dbReference type="FunFam" id="3.40.50.300:FF:003258">
    <property type="entry name" value="Elongation factor G"/>
    <property type="match status" value="1"/>
</dbReference>
<dbReference type="Gene3D" id="3.30.230.10">
    <property type="match status" value="1"/>
</dbReference>
<dbReference type="Gene3D" id="3.30.70.240">
    <property type="match status" value="1"/>
</dbReference>
<dbReference type="Gene3D" id="3.30.70.870">
    <property type="entry name" value="Elongation Factor G (Translational Gtpase), domain 3"/>
    <property type="match status" value="1"/>
</dbReference>
<dbReference type="Gene3D" id="3.40.50.300">
    <property type="entry name" value="P-loop containing nucleotide triphosphate hydrolases"/>
    <property type="match status" value="1"/>
</dbReference>
<dbReference type="Gene3D" id="2.40.30.10">
    <property type="entry name" value="Translation factors"/>
    <property type="match status" value="1"/>
</dbReference>
<dbReference type="HAMAP" id="MF_00054_B">
    <property type="entry name" value="EF_G_EF_2_B"/>
    <property type="match status" value="1"/>
</dbReference>
<dbReference type="InterPro" id="IPR041095">
    <property type="entry name" value="EFG_II"/>
</dbReference>
<dbReference type="InterPro" id="IPR009022">
    <property type="entry name" value="EFG_III"/>
</dbReference>
<dbReference type="InterPro" id="IPR035647">
    <property type="entry name" value="EFG_III/V"/>
</dbReference>
<dbReference type="InterPro" id="IPR035649">
    <property type="entry name" value="EFG_V"/>
</dbReference>
<dbReference type="InterPro" id="IPR000640">
    <property type="entry name" value="EFG_V-like"/>
</dbReference>
<dbReference type="InterPro" id="IPR004161">
    <property type="entry name" value="EFTu-like_2"/>
</dbReference>
<dbReference type="InterPro" id="IPR031157">
    <property type="entry name" value="G_TR_CS"/>
</dbReference>
<dbReference type="InterPro" id="IPR027417">
    <property type="entry name" value="P-loop_NTPase"/>
</dbReference>
<dbReference type="InterPro" id="IPR020568">
    <property type="entry name" value="Ribosomal_Su5_D2-typ_SF"/>
</dbReference>
<dbReference type="InterPro" id="IPR014721">
    <property type="entry name" value="Ribsml_uS5_D2-typ_fold_subgr"/>
</dbReference>
<dbReference type="InterPro" id="IPR005225">
    <property type="entry name" value="Small_GTP-bd"/>
</dbReference>
<dbReference type="InterPro" id="IPR000795">
    <property type="entry name" value="T_Tr_GTP-bd_dom"/>
</dbReference>
<dbReference type="InterPro" id="IPR009000">
    <property type="entry name" value="Transl_B-barrel_sf"/>
</dbReference>
<dbReference type="InterPro" id="IPR004540">
    <property type="entry name" value="Transl_elong_EFG/EF2"/>
</dbReference>
<dbReference type="InterPro" id="IPR005517">
    <property type="entry name" value="Transl_elong_EFG/EF2_IV"/>
</dbReference>
<dbReference type="NCBIfam" id="TIGR00484">
    <property type="entry name" value="EF-G"/>
    <property type="match status" value="1"/>
</dbReference>
<dbReference type="NCBIfam" id="NF009381">
    <property type="entry name" value="PRK12740.1-5"/>
    <property type="match status" value="1"/>
</dbReference>
<dbReference type="NCBIfam" id="TIGR00231">
    <property type="entry name" value="small_GTP"/>
    <property type="match status" value="1"/>
</dbReference>
<dbReference type="PANTHER" id="PTHR43261:SF1">
    <property type="entry name" value="RIBOSOME-RELEASING FACTOR 2, MITOCHONDRIAL"/>
    <property type="match status" value="1"/>
</dbReference>
<dbReference type="PANTHER" id="PTHR43261">
    <property type="entry name" value="TRANSLATION ELONGATION FACTOR G-RELATED"/>
    <property type="match status" value="1"/>
</dbReference>
<dbReference type="Pfam" id="PF00679">
    <property type="entry name" value="EFG_C"/>
    <property type="match status" value="1"/>
</dbReference>
<dbReference type="Pfam" id="PF14492">
    <property type="entry name" value="EFG_III"/>
    <property type="match status" value="1"/>
</dbReference>
<dbReference type="Pfam" id="PF03764">
    <property type="entry name" value="EFG_IV"/>
    <property type="match status" value="1"/>
</dbReference>
<dbReference type="Pfam" id="PF00009">
    <property type="entry name" value="GTP_EFTU"/>
    <property type="match status" value="1"/>
</dbReference>
<dbReference type="Pfam" id="PF03144">
    <property type="entry name" value="GTP_EFTU_D2"/>
    <property type="match status" value="1"/>
</dbReference>
<dbReference type="PRINTS" id="PR00315">
    <property type="entry name" value="ELONGATNFCT"/>
</dbReference>
<dbReference type="SMART" id="SM00838">
    <property type="entry name" value="EFG_C"/>
    <property type="match status" value="1"/>
</dbReference>
<dbReference type="SMART" id="SM00889">
    <property type="entry name" value="EFG_IV"/>
    <property type="match status" value="1"/>
</dbReference>
<dbReference type="SUPFAM" id="SSF54980">
    <property type="entry name" value="EF-G C-terminal domain-like"/>
    <property type="match status" value="2"/>
</dbReference>
<dbReference type="SUPFAM" id="SSF52540">
    <property type="entry name" value="P-loop containing nucleoside triphosphate hydrolases"/>
    <property type="match status" value="1"/>
</dbReference>
<dbReference type="SUPFAM" id="SSF54211">
    <property type="entry name" value="Ribosomal protein S5 domain 2-like"/>
    <property type="match status" value="1"/>
</dbReference>
<dbReference type="SUPFAM" id="SSF50447">
    <property type="entry name" value="Translation proteins"/>
    <property type="match status" value="1"/>
</dbReference>
<dbReference type="PROSITE" id="PS00301">
    <property type="entry name" value="G_TR_1"/>
    <property type="match status" value="1"/>
</dbReference>
<dbReference type="PROSITE" id="PS51722">
    <property type="entry name" value="G_TR_2"/>
    <property type="match status" value="1"/>
</dbReference>
<proteinExistence type="inferred from homology"/>
<organism>
    <name type="scientific">Streptomyces coelicolor (strain ATCC BAA-471 / A3(2) / M145)</name>
    <dbReference type="NCBI Taxonomy" id="100226"/>
    <lineage>
        <taxon>Bacteria</taxon>
        <taxon>Bacillati</taxon>
        <taxon>Actinomycetota</taxon>
        <taxon>Actinomycetes</taxon>
        <taxon>Kitasatosporales</taxon>
        <taxon>Streptomycetaceae</taxon>
        <taxon>Streptomyces</taxon>
        <taxon>Streptomyces albidoflavus group</taxon>
    </lineage>
</organism>
<feature type="chain" id="PRO_0000091228" description="Elongation factor G 2">
    <location>
        <begin position="1"/>
        <end position="686"/>
    </location>
</feature>
<feature type="domain" description="tr-type G">
    <location>
        <begin position="7"/>
        <end position="280"/>
    </location>
</feature>
<feature type="binding site" evidence="1">
    <location>
        <begin position="16"/>
        <end position="23"/>
    </location>
    <ligand>
        <name>GTP</name>
        <dbReference type="ChEBI" id="CHEBI:37565"/>
    </ligand>
</feature>
<feature type="binding site" evidence="1">
    <location>
        <begin position="80"/>
        <end position="84"/>
    </location>
    <ligand>
        <name>GTP</name>
        <dbReference type="ChEBI" id="CHEBI:37565"/>
    </ligand>
</feature>
<feature type="binding site" evidence="1">
    <location>
        <begin position="134"/>
        <end position="137"/>
    </location>
    <ligand>
        <name>GTP</name>
        <dbReference type="ChEBI" id="CHEBI:37565"/>
    </ligand>
</feature>